<organism>
    <name type="scientific">Thomasomys gracilis</name>
    <name type="common">Slender oldfield mouse</name>
    <dbReference type="NCBI Taxonomy" id="89109"/>
    <lineage>
        <taxon>Eukaryota</taxon>
        <taxon>Metazoa</taxon>
        <taxon>Chordata</taxon>
        <taxon>Craniata</taxon>
        <taxon>Vertebrata</taxon>
        <taxon>Euteleostomi</taxon>
        <taxon>Mammalia</taxon>
        <taxon>Eutheria</taxon>
        <taxon>Euarchontoglires</taxon>
        <taxon>Glires</taxon>
        <taxon>Rodentia</taxon>
        <taxon>Myomorpha</taxon>
        <taxon>Muroidea</taxon>
        <taxon>Cricetidae</taxon>
        <taxon>Sigmodontinae</taxon>
        <taxon>Thomasomys</taxon>
    </lineage>
</organism>
<gene>
    <name type="primary">MT-CYB</name>
    <name type="synonym">COB</name>
    <name type="synonym">CYTB</name>
    <name type="synonym">MTCYB</name>
</gene>
<dbReference type="EMBL" id="AF108674">
    <property type="protein sequence ID" value="AAD45456.1"/>
    <property type="molecule type" value="Genomic_DNA"/>
</dbReference>
<dbReference type="GO" id="GO:0005743">
    <property type="term" value="C:mitochondrial inner membrane"/>
    <property type="evidence" value="ECO:0007669"/>
    <property type="project" value="UniProtKB-SubCell"/>
</dbReference>
<dbReference type="GO" id="GO:0045275">
    <property type="term" value="C:respiratory chain complex III"/>
    <property type="evidence" value="ECO:0007669"/>
    <property type="project" value="InterPro"/>
</dbReference>
<dbReference type="GO" id="GO:0046872">
    <property type="term" value="F:metal ion binding"/>
    <property type="evidence" value="ECO:0007669"/>
    <property type="project" value="UniProtKB-KW"/>
</dbReference>
<dbReference type="GO" id="GO:0008121">
    <property type="term" value="F:ubiquinol-cytochrome-c reductase activity"/>
    <property type="evidence" value="ECO:0007669"/>
    <property type="project" value="InterPro"/>
</dbReference>
<dbReference type="GO" id="GO:0006122">
    <property type="term" value="P:mitochondrial electron transport, ubiquinol to cytochrome c"/>
    <property type="evidence" value="ECO:0007669"/>
    <property type="project" value="TreeGrafter"/>
</dbReference>
<dbReference type="CDD" id="cd00290">
    <property type="entry name" value="cytochrome_b_C"/>
    <property type="match status" value="1"/>
</dbReference>
<dbReference type="CDD" id="cd00284">
    <property type="entry name" value="Cytochrome_b_N"/>
    <property type="match status" value="1"/>
</dbReference>
<dbReference type="FunFam" id="1.20.810.10:FF:000002">
    <property type="entry name" value="Cytochrome b"/>
    <property type="match status" value="1"/>
</dbReference>
<dbReference type="Gene3D" id="1.20.810.10">
    <property type="entry name" value="Cytochrome Bc1 Complex, Chain C"/>
    <property type="match status" value="1"/>
</dbReference>
<dbReference type="InterPro" id="IPR005798">
    <property type="entry name" value="Cyt_b/b6_C"/>
</dbReference>
<dbReference type="InterPro" id="IPR036150">
    <property type="entry name" value="Cyt_b/b6_C_sf"/>
</dbReference>
<dbReference type="InterPro" id="IPR005797">
    <property type="entry name" value="Cyt_b/b6_N"/>
</dbReference>
<dbReference type="InterPro" id="IPR027387">
    <property type="entry name" value="Cytb/b6-like_sf"/>
</dbReference>
<dbReference type="InterPro" id="IPR030689">
    <property type="entry name" value="Cytochrome_b"/>
</dbReference>
<dbReference type="InterPro" id="IPR048260">
    <property type="entry name" value="Cytochrome_b_C_euk/bac"/>
</dbReference>
<dbReference type="InterPro" id="IPR048259">
    <property type="entry name" value="Cytochrome_b_N_euk/bac"/>
</dbReference>
<dbReference type="InterPro" id="IPR016174">
    <property type="entry name" value="Di-haem_cyt_TM"/>
</dbReference>
<dbReference type="PANTHER" id="PTHR19271">
    <property type="entry name" value="CYTOCHROME B"/>
    <property type="match status" value="1"/>
</dbReference>
<dbReference type="PANTHER" id="PTHR19271:SF16">
    <property type="entry name" value="CYTOCHROME B"/>
    <property type="match status" value="1"/>
</dbReference>
<dbReference type="Pfam" id="PF00032">
    <property type="entry name" value="Cytochrom_B_C"/>
    <property type="match status" value="1"/>
</dbReference>
<dbReference type="Pfam" id="PF00033">
    <property type="entry name" value="Cytochrome_B"/>
    <property type="match status" value="1"/>
</dbReference>
<dbReference type="PIRSF" id="PIRSF038885">
    <property type="entry name" value="COB"/>
    <property type="match status" value="1"/>
</dbReference>
<dbReference type="SUPFAM" id="SSF81648">
    <property type="entry name" value="a domain/subunit of cytochrome bc1 complex (Ubiquinol-cytochrome c reductase)"/>
    <property type="match status" value="1"/>
</dbReference>
<dbReference type="SUPFAM" id="SSF81342">
    <property type="entry name" value="Transmembrane di-heme cytochromes"/>
    <property type="match status" value="1"/>
</dbReference>
<dbReference type="PROSITE" id="PS51003">
    <property type="entry name" value="CYTB_CTER"/>
    <property type="match status" value="1"/>
</dbReference>
<dbReference type="PROSITE" id="PS51002">
    <property type="entry name" value="CYTB_NTER"/>
    <property type="match status" value="1"/>
</dbReference>
<reference key="1">
    <citation type="journal article" date="1999" name="J. Mammal. Evol.">
        <title>Phylogenetic relationships and the radiation of Sigmodontine rodents in South America: evidence from cytochrome b.</title>
        <authorList>
            <person name="Smith M.F."/>
            <person name="Patton J.L."/>
        </authorList>
    </citation>
    <scope>NUCLEOTIDE SEQUENCE [GENOMIC DNA]</scope>
</reference>
<comment type="function">
    <text evidence="2">Component of the ubiquinol-cytochrome c reductase complex (complex III or cytochrome b-c1 complex) that is part of the mitochondrial respiratory chain. The b-c1 complex mediates electron transfer from ubiquinol to cytochrome c. Contributes to the generation of a proton gradient across the mitochondrial membrane that is then used for ATP synthesis.</text>
</comment>
<comment type="cofactor">
    <cofactor evidence="2">
        <name>heme b</name>
        <dbReference type="ChEBI" id="CHEBI:60344"/>
    </cofactor>
    <text evidence="2">Binds 2 heme b groups non-covalently.</text>
</comment>
<comment type="subunit">
    <text evidence="2">The cytochrome bc1 complex contains 11 subunits: 3 respiratory subunits (MT-CYB, CYC1 and UQCRFS1), 2 core proteins (UQCRC1 and UQCRC2) and 6 low-molecular weight proteins (UQCRH/QCR6, UQCRB/QCR7, UQCRQ/QCR8, UQCR10/QCR9, UQCR11/QCR10 and a cleavage product of UQCRFS1). This cytochrome bc1 complex then forms a dimer.</text>
</comment>
<comment type="subcellular location">
    <subcellularLocation>
        <location evidence="2">Mitochondrion inner membrane</location>
        <topology evidence="2">Multi-pass membrane protein</topology>
    </subcellularLocation>
</comment>
<comment type="miscellaneous">
    <text evidence="1">Heme 1 (or BL or b562) is low-potential and absorbs at about 562 nm, and heme 2 (or BH or b566) is high-potential and absorbs at about 566 nm.</text>
</comment>
<comment type="similarity">
    <text evidence="3 4">Belongs to the cytochrome b family.</text>
</comment>
<comment type="caution">
    <text evidence="2">The full-length protein contains only eight transmembrane helices, not nine as predicted by bioinformatics tools.</text>
</comment>
<name>CYB_THOGR</name>
<sequence>MTIMRXKHPLLKLINHSLIDLPAPSNISSWWNFGSLLGICLMIQILTGLFLAMHYTSDTTTAFSSVAHICRDVNYGWLIRYLHANGASMFFICLFIHVGRGIYYGSYTLLETWNIGIILLFTTMATAFVGYVLPWGQMSFWGATVITNLLSAIPYIGNTLVEWIWGGFSVDKATLTRFFAFHFILPFIITALVLVHLLFLHETGSNNPSGLNSNSDKIPFHPYYTIKDLLGILLLLMVLMILVLFFPDILGDPDNYTPANPLNTPAHIKPEWYFLFAYAILRSIPNKLGGVLALILSILILAAFPLLNSSKQHSLIYRPITQSLYWIFIANLLVLTWIGGQPVEYPFTTIGQISSVLYFTIIIVLMPMAGMIENKILKLY</sequence>
<feature type="chain" id="PRO_0000255145" description="Cytochrome b">
    <location>
        <begin position="1"/>
        <end position="380"/>
    </location>
</feature>
<feature type="transmembrane region" description="Helical" evidence="2">
    <location>
        <begin position="33"/>
        <end position="53"/>
    </location>
</feature>
<feature type="transmembrane region" description="Helical" evidence="2">
    <location>
        <begin position="77"/>
        <end position="98"/>
    </location>
</feature>
<feature type="transmembrane region" description="Helical" evidence="2">
    <location>
        <begin position="113"/>
        <end position="133"/>
    </location>
</feature>
<feature type="transmembrane region" description="Helical" evidence="2">
    <location>
        <begin position="178"/>
        <end position="198"/>
    </location>
</feature>
<feature type="transmembrane region" description="Helical" evidence="2">
    <location>
        <begin position="226"/>
        <end position="246"/>
    </location>
</feature>
<feature type="transmembrane region" description="Helical" evidence="2">
    <location>
        <begin position="288"/>
        <end position="308"/>
    </location>
</feature>
<feature type="transmembrane region" description="Helical" evidence="2">
    <location>
        <begin position="320"/>
        <end position="340"/>
    </location>
</feature>
<feature type="transmembrane region" description="Helical" evidence="2">
    <location>
        <begin position="347"/>
        <end position="367"/>
    </location>
</feature>
<feature type="binding site" description="axial binding residue" evidence="2">
    <location>
        <position position="83"/>
    </location>
    <ligand>
        <name>heme b</name>
        <dbReference type="ChEBI" id="CHEBI:60344"/>
        <label>b562</label>
    </ligand>
    <ligandPart>
        <name>Fe</name>
        <dbReference type="ChEBI" id="CHEBI:18248"/>
    </ligandPart>
</feature>
<feature type="binding site" description="axial binding residue" evidence="2">
    <location>
        <position position="97"/>
    </location>
    <ligand>
        <name>heme b</name>
        <dbReference type="ChEBI" id="CHEBI:60344"/>
        <label>b566</label>
    </ligand>
    <ligandPart>
        <name>Fe</name>
        <dbReference type="ChEBI" id="CHEBI:18248"/>
    </ligandPart>
</feature>
<feature type="binding site" description="axial binding residue" evidence="2">
    <location>
        <position position="182"/>
    </location>
    <ligand>
        <name>heme b</name>
        <dbReference type="ChEBI" id="CHEBI:60344"/>
        <label>b562</label>
    </ligand>
    <ligandPart>
        <name>Fe</name>
        <dbReference type="ChEBI" id="CHEBI:18248"/>
    </ligandPart>
</feature>
<feature type="binding site" description="axial binding residue" evidence="2">
    <location>
        <position position="196"/>
    </location>
    <ligand>
        <name>heme b</name>
        <dbReference type="ChEBI" id="CHEBI:60344"/>
        <label>b566</label>
    </ligand>
    <ligandPart>
        <name>Fe</name>
        <dbReference type="ChEBI" id="CHEBI:18248"/>
    </ligandPart>
</feature>
<feature type="binding site" evidence="2">
    <location>
        <position position="201"/>
    </location>
    <ligand>
        <name>a ubiquinone</name>
        <dbReference type="ChEBI" id="CHEBI:16389"/>
    </ligand>
</feature>
<evidence type="ECO:0000250" key="1"/>
<evidence type="ECO:0000250" key="2">
    <source>
        <dbReference type="UniProtKB" id="P00157"/>
    </source>
</evidence>
<evidence type="ECO:0000255" key="3">
    <source>
        <dbReference type="PROSITE-ProRule" id="PRU00967"/>
    </source>
</evidence>
<evidence type="ECO:0000255" key="4">
    <source>
        <dbReference type="PROSITE-ProRule" id="PRU00968"/>
    </source>
</evidence>
<geneLocation type="mitochondrion"/>
<keyword id="KW-0249">Electron transport</keyword>
<keyword id="KW-0349">Heme</keyword>
<keyword id="KW-0408">Iron</keyword>
<keyword id="KW-0472">Membrane</keyword>
<keyword id="KW-0479">Metal-binding</keyword>
<keyword id="KW-0496">Mitochondrion</keyword>
<keyword id="KW-0999">Mitochondrion inner membrane</keyword>
<keyword id="KW-0679">Respiratory chain</keyword>
<keyword id="KW-0812">Transmembrane</keyword>
<keyword id="KW-1133">Transmembrane helix</keyword>
<keyword id="KW-0813">Transport</keyword>
<keyword id="KW-0830">Ubiquinone</keyword>
<accession>Q9XNX0</accession>
<protein>
    <recommendedName>
        <fullName>Cytochrome b</fullName>
    </recommendedName>
    <alternativeName>
        <fullName>Complex III subunit 3</fullName>
    </alternativeName>
    <alternativeName>
        <fullName>Complex III subunit III</fullName>
    </alternativeName>
    <alternativeName>
        <fullName>Cytochrome b-c1 complex subunit 3</fullName>
    </alternativeName>
    <alternativeName>
        <fullName>Ubiquinol-cytochrome-c reductase complex cytochrome b subunit</fullName>
    </alternativeName>
</protein>
<proteinExistence type="inferred from homology"/>